<comment type="function">
    <text evidence="1">Specifically methylates the uridine in position 2552 of 23S rRNA at the 2'-O position of the ribose in the fully assembled 50S ribosomal subunit.</text>
</comment>
<comment type="catalytic activity">
    <reaction evidence="1">
        <text>uridine(2552) in 23S rRNA + S-adenosyl-L-methionine = 2'-O-methyluridine(2552) in 23S rRNA + S-adenosyl-L-homocysteine + H(+)</text>
        <dbReference type="Rhea" id="RHEA:42720"/>
        <dbReference type="Rhea" id="RHEA-COMP:10202"/>
        <dbReference type="Rhea" id="RHEA-COMP:10203"/>
        <dbReference type="ChEBI" id="CHEBI:15378"/>
        <dbReference type="ChEBI" id="CHEBI:57856"/>
        <dbReference type="ChEBI" id="CHEBI:59789"/>
        <dbReference type="ChEBI" id="CHEBI:65315"/>
        <dbReference type="ChEBI" id="CHEBI:74478"/>
        <dbReference type="EC" id="2.1.1.166"/>
    </reaction>
</comment>
<comment type="subcellular location">
    <subcellularLocation>
        <location evidence="1">Cytoplasm</location>
    </subcellularLocation>
</comment>
<comment type="similarity">
    <text evidence="1">Belongs to the class I-like SAM-binding methyltransferase superfamily. RNA methyltransferase RlmE family.</text>
</comment>
<accession>A9KZX9</accession>
<feature type="chain" id="PRO_1000087714" description="Ribosomal RNA large subunit methyltransferase E">
    <location>
        <begin position="1"/>
        <end position="209"/>
    </location>
</feature>
<feature type="active site" description="Proton acceptor" evidence="1">
    <location>
        <position position="164"/>
    </location>
</feature>
<feature type="binding site" evidence="1">
    <location>
        <position position="63"/>
    </location>
    <ligand>
        <name>S-adenosyl-L-methionine</name>
        <dbReference type="ChEBI" id="CHEBI:59789"/>
    </ligand>
</feature>
<feature type="binding site" evidence="1">
    <location>
        <position position="65"/>
    </location>
    <ligand>
        <name>S-adenosyl-L-methionine</name>
        <dbReference type="ChEBI" id="CHEBI:59789"/>
    </ligand>
</feature>
<feature type="binding site" evidence="1">
    <location>
        <position position="83"/>
    </location>
    <ligand>
        <name>S-adenosyl-L-methionine</name>
        <dbReference type="ChEBI" id="CHEBI:59789"/>
    </ligand>
</feature>
<feature type="binding site" evidence="1">
    <location>
        <position position="99"/>
    </location>
    <ligand>
        <name>S-adenosyl-L-methionine</name>
        <dbReference type="ChEBI" id="CHEBI:59789"/>
    </ligand>
</feature>
<feature type="binding site" evidence="1">
    <location>
        <position position="124"/>
    </location>
    <ligand>
        <name>S-adenosyl-L-methionine</name>
        <dbReference type="ChEBI" id="CHEBI:59789"/>
    </ligand>
</feature>
<gene>
    <name evidence="1" type="primary">rlmE</name>
    <name evidence="1" type="synonym">ftsJ</name>
    <name evidence="1" type="synonym">rrmJ</name>
    <name type="ordered locus">Sbal195_3425</name>
</gene>
<organism>
    <name type="scientific">Shewanella baltica (strain OS195)</name>
    <dbReference type="NCBI Taxonomy" id="399599"/>
    <lineage>
        <taxon>Bacteria</taxon>
        <taxon>Pseudomonadati</taxon>
        <taxon>Pseudomonadota</taxon>
        <taxon>Gammaproteobacteria</taxon>
        <taxon>Alteromonadales</taxon>
        <taxon>Shewanellaceae</taxon>
        <taxon>Shewanella</taxon>
    </lineage>
</organism>
<proteinExistence type="inferred from homology"/>
<keyword id="KW-0963">Cytoplasm</keyword>
<keyword id="KW-0489">Methyltransferase</keyword>
<keyword id="KW-0698">rRNA processing</keyword>
<keyword id="KW-0949">S-adenosyl-L-methionine</keyword>
<keyword id="KW-0808">Transferase</keyword>
<evidence type="ECO:0000255" key="1">
    <source>
        <dbReference type="HAMAP-Rule" id="MF_01547"/>
    </source>
</evidence>
<sequence>MSGIKRTASSNRWMLEHFDDHYVKLAQKMGLRSRAAFKLEEIQQKDQLIRPGMTVVDLGAAPGGWSQVAVKLAGDRGKVIACDILPMDPIVGVDFLQGDFREDKVLQALLTRVGDAKVDVVLSDMAPNMSGSDSVDQPRAMYLVELALDMCHQVLAPNGCFAVKVFQGEGFDEYMKAVKAVFKVVKTRKPDSSRARSREVYLVATGYKL</sequence>
<name>RLME_SHEB9</name>
<reference key="1">
    <citation type="submission" date="2007-11" db="EMBL/GenBank/DDBJ databases">
        <title>Complete sequence of chromosome of Shewanella baltica OS195.</title>
        <authorList>
            <consortium name="US DOE Joint Genome Institute"/>
            <person name="Copeland A."/>
            <person name="Lucas S."/>
            <person name="Lapidus A."/>
            <person name="Barry K."/>
            <person name="Glavina del Rio T."/>
            <person name="Dalin E."/>
            <person name="Tice H."/>
            <person name="Pitluck S."/>
            <person name="Chain P."/>
            <person name="Malfatti S."/>
            <person name="Shin M."/>
            <person name="Vergez L."/>
            <person name="Schmutz J."/>
            <person name="Larimer F."/>
            <person name="Land M."/>
            <person name="Hauser L."/>
            <person name="Kyrpides N."/>
            <person name="Kim E."/>
            <person name="Brettar I."/>
            <person name="Rodrigues J."/>
            <person name="Konstantinidis K."/>
            <person name="Klappenbach J."/>
            <person name="Hofle M."/>
            <person name="Tiedje J."/>
            <person name="Richardson P."/>
        </authorList>
    </citation>
    <scope>NUCLEOTIDE SEQUENCE [LARGE SCALE GENOMIC DNA]</scope>
    <source>
        <strain>OS195</strain>
    </source>
</reference>
<dbReference type="EC" id="2.1.1.166" evidence="1"/>
<dbReference type="EMBL" id="CP000891">
    <property type="protein sequence ID" value="ABX50587.1"/>
    <property type="molecule type" value="Genomic_DNA"/>
</dbReference>
<dbReference type="RefSeq" id="WP_006082724.1">
    <property type="nucleotide sequence ID" value="NC_009997.1"/>
</dbReference>
<dbReference type="SMR" id="A9KZX9"/>
<dbReference type="GeneID" id="11773467"/>
<dbReference type="KEGG" id="sbn:Sbal195_3425"/>
<dbReference type="HOGENOM" id="CLU_009422_4_0_6"/>
<dbReference type="Proteomes" id="UP000000770">
    <property type="component" value="Chromosome"/>
</dbReference>
<dbReference type="GO" id="GO:0005737">
    <property type="term" value="C:cytoplasm"/>
    <property type="evidence" value="ECO:0007669"/>
    <property type="project" value="UniProtKB-SubCell"/>
</dbReference>
<dbReference type="GO" id="GO:0008650">
    <property type="term" value="F:rRNA (uridine-2'-O-)-methyltransferase activity"/>
    <property type="evidence" value="ECO:0007669"/>
    <property type="project" value="UniProtKB-UniRule"/>
</dbReference>
<dbReference type="FunFam" id="3.40.50.150:FF:000005">
    <property type="entry name" value="Ribosomal RNA large subunit methyltransferase E"/>
    <property type="match status" value="1"/>
</dbReference>
<dbReference type="Gene3D" id="3.40.50.150">
    <property type="entry name" value="Vaccinia Virus protein VP39"/>
    <property type="match status" value="1"/>
</dbReference>
<dbReference type="HAMAP" id="MF_01547">
    <property type="entry name" value="RNA_methyltr_E"/>
    <property type="match status" value="1"/>
</dbReference>
<dbReference type="InterPro" id="IPR050082">
    <property type="entry name" value="RNA_methyltr_RlmE"/>
</dbReference>
<dbReference type="InterPro" id="IPR002877">
    <property type="entry name" value="RNA_MeTrfase_FtsJ_dom"/>
</dbReference>
<dbReference type="InterPro" id="IPR015507">
    <property type="entry name" value="rRNA-MeTfrase_E"/>
</dbReference>
<dbReference type="InterPro" id="IPR029063">
    <property type="entry name" value="SAM-dependent_MTases_sf"/>
</dbReference>
<dbReference type="NCBIfam" id="NF008390">
    <property type="entry name" value="PRK11188.1"/>
    <property type="match status" value="1"/>
</dbReference>
<dbReference type="PANTHER" id="PTHR10920">
    <property type="entry name" value="RIBOSOMAL RNA METHYLTRANSFERASE"/>
    <property type="match status" value="1"/>
</dbReference>
<dbReference type="PANTHER" id="PTHR10920:SF18">
    <property type="entry name" value="RRNA METHYLTRANSFERASE 2, MITOCHONDRIAL"/>
    <property type="match status" value="1"/>
</dbReference>
<dbReference type="Pfam" id="PF01728">
    <property type="entry name" value="FtsJ"/>
    <property type="match status" value="1"/>
</dbReference>
<dbReference type="PIRSF" id="PIRSF005461">
    <property type="entry name" value="23S_rRNA_mtase"/>
    <property type="match status" value="1"/>
</dbReference>
<dbReference type="SUPFAM" id="SSF53335">
    <property type="entry name" value="S-adenosyl-L-methionine-dependent methyltransferases"/>
    <property type="match status" value="1"/>
</dbReference>
<protein>
    <recommendedName>
        <fullName evidence="1">Ribosomal RNA large subunit methyltransferase E</fullName>
        <ecNumber evidence="1">2.1.1.166</ecNumber>
    </recommendedName>
    <alternativeName>
        <fullName evidence="1">23S rRNA Um2552 methyltransferase</fullName>
    </alternativeName>
    <alternativeName>
        <fullName evidence="1">rRNA (uridine-2'-O-)-methyltransferase</fullName>
    </alternativeName>
</protein>